<evidence type="ECO:0000255" key="1">
    <source>
        <dbReference type="HAMAP-Rule" id="MF_01171"/>
    </source>
</evidence>
<organism>
    <name type="scientific">Escherichia coli O81 (strain ED1a)</name>
    <dbReference type="NCBI Taxonomy" id="585397"/>
    <lineage>
        <taxon>Bacteria</taxon>
        <taxon>Pseudomonadati</taxon>
        <taxon>Pseudomonadota</taxon>
        <taxon>Gammaproteobacteria</taxon>
        <taxon>Enterobacterales</taxon>
        <taxon>Enterobacteriaceae</taxon>
        <taxon>Escherichia</taxon>
    </lineage>
</organism>
<feature type="chain" id="PRO_1000164367" description="Arginine N-succinyltransferase">
    <location>
        <begin position="1"/>
        <end position="344"/>
    </location>
</feature>
<feature type="active site" description="Proton donor" evidence="1">
    <location>
        <position position="229"/>
    </location>
</feature>
<feature type="binding site" evidence="1">
    <location>
        <position position="125"/>
    </location>
    <ligand>
        <name>succinyl-CoA</name>
        <dbReference type="ChEBI" id="CHEBI:57292"/>
    </ligand>
</feature>
<keyword id="KW-0012">Acyltransferase</keyword>
<keyword id="KW-0056">Arginine metabolism</keyword>
<keyword id="KW-0808">Transferase</keyword>
<sequence>MMVIRPVERSDVSALMQLASKTGGGLTSLPANEATLSVRIERAIKTWQGELPKSEQGYVFVLEDSETGTVAGICAIEVAVGLNDPWYNYRVGTLVHASKELNVYNALPTLFLSNDHTGSSELCTLFLDPKWRKEGNGYLLSKSRFMFMAAFRDKFNDKVVAEMRGVIDEHGYSPFWQSLGKRFFSMDFSRADFLCGTGQKAFIAELMPKHPIYTYFLSQEAQDVIGQVHPQTAPARAVLEKEGFRYRNYIDIFDGGPTLECDIDRVRAIRKSRLVEVAEGQPAQGDFPACLVANENYHHFRVVLVRTDPATERLILTAAQLDVLKCHAGDRVRLVRLCAEEKTA</sequence>
<comment type="function">
    <text evidence="1">Catalyzes the transfer of succinyl-CoA to arginine to produce N(2)-succinylarginine.</text>
</comment>
<comment type="catalytic activity">
    <reaction evidence="1">
        <text>succinyl-CoA + L-arginine = N(2)-succinyl-L-arginine + CoA + H(+)</text>
        <dbReference type="Rhea" id="RHEA:15185"/>
        <dbReference type="ChEBI" id="CHEBI:15378"/>
        <dbReference type="ChEBI" id="CHEBI:32682"/>
        <dbReference type="ChEBI" id="CHEBI:57287"/>
        <dbReference type="ChEBI" id="CHEBI:57292"/>
        <dbReference type="ChEBI" id="CHEBI:58241"/>
        <dbReference type="EC" id="2.3.1.109"/>
    </reaction>
</comment>
<comment type="pathway">
    <text evidence="1">Amino-acid degradation; L-arginine degradation via AST pathway; L-glutamate and succinate from L-arginine: step 1/5.</text>
</comment>
<comment type="similarity">
    <text evidence="1">Belongs to the arginine N-succinyltransferase family.</text>
</comment>
<protein>
    <recommendedName>
        <fullName evidence="1">Arginine N-succinyltransferase</fullName>
        <shortName evidence="1">AST</shortName>
        <ecNumber evidence="1">2.3.1.109</ecNumber>
    </recommendedName>
    <alternativeName>
        <fullName evidence="1">AOST</fullName>
    </alternativeName>
</protein>
<name>ASTA_ECO81</name>
<proteinExistence type="inferred from homology"/>
<dbReference type="EC" id="2.3.1.109" evidence="1"/>
<dbReference type="EMBL" id="CU928162">
    <property type="protein sequence ID" value="CAR08142.2"/>
    <property type="molecule type" value="Genomic_DNA"/>
</dbReference>
<dbReference type="RefSeq" id="WP_000989442.1">
    <property type="nucleotide sequence ID" value="NC_011745.1"/>
</dbReference>
<dbReference type="SMR" id="B7MVM6"/>
<dbReference type="KEGG" id="ecq:ECED1_1949"/>
<dbReference type="HOGENOM" id="CLU_057655_0_0_6"/>
<dbReference type="UniPathway" id="UPA00185">
    <property type="reaction ID" value="UER00279"/>
</dbReference>
<dbReference type="Proteomes" id="UP000000748">
    <property type="component" value="Chromosome"/>
</dbReference>
<dbReference type="GO" id="GO:0008791">
    <property type="term" value="F:arginine N-succinyltransferase activity"/>
    <property type="evidence" value="ECO:0007669"/>
    <property type="project" value="UniProtKB-UniRule"/>
</dbReference>
<dbReference type="GO" id="GO:0019544">
    <property type="term" value="P:arginine catabolic process to glutamate"/>
    <property type="evidence" value="ECO:0007669"/>
    <property type="project" value="UniProtKB-UniRule"/>
</dbReference>
<dbReference type="GO" id="GO:0019545">
    <property type="term" value="P:arginine catabolic process to succinate"/>
    <property type="evidence" value="ECO:0007669"/>
    <property type="project" value="UniProtKB-UniRule"/>
</dbReference>
<dbReference type="Gene3D" id="2.40.40.20">
    <property type="match status" value="1"/>
</dbReference>
<dbReference type="HAMAP" id="MF_01171">
    <property type="entry name" value="AstA"/>
    <property type="match status" value="1"/>
</dbReference>
<dbReference type="InterPro" id="IPR016181">
    <property type="entry name" value="Acyl_CoA_acyltransferase"/>
</dbReference>
<dbReference type="InterPro" id="IPR007041">
    <property type="entry name" value="Arg_succinylTrfase_AstA/AruG"/>
</dbReference>
<dbReference type="InterPro" id="IPR017650">
    <property type="entry name" value="Arginine_N-succinylTrfase"/>
</dbReference>
<dbReference type="NCBIfam" id="TIGR03243">
    <property type="entry name" value="arg_catab_AOST"/>
    <property type="match status" value="1"/>
</dbReference>
<dbReference type="NCBIfam" id="TIGR03244">
    <property type="entry name" value="arg_catab_AstA"/>
    <property type="match status" value="1"/>
</dbReference>
<dbReference type="NCBIfam" id="NF007770">
    <property type="entry name" value="PRK10456.1"/>
    <property type="match status" value="1"/>
</dbReference>
<dbReference type="PANTHER" id="PTHR30420:SF1">
    <property type="entry name" value="ARGININE N-SUCCINYLTRANSFERASE"/>
    <property type="match status" value="1"/>
</dbReference>
<dbReference type="PANTHER" id="PTHR30420">
    <property type="entry name" value="N-SUCCINYLARGININE DIHYDROLASE"/>
    <property type="match status" value="1"/>
</dbReference>
<dbReference type="Pfam" id="PF04958">
    <property type="entry name" value="AstA"/>
    <property type="match status" value="1"/>
</dbReference>
<dbReference type="SUPFAM" id="SSF55729">
    <property type="entry name" value="Acyl-CoA N-acyltransferases (Nat)"/>
    <property type="match status" value="1"/>
</dbReference>
<gene>
    <name evidence="1" type="primary">astA</name>
    <name type="ordered locus">ECED1_1949</name>
</gene>
<accession>B7MVM6</accession>
<reference key="1">
    <citation type="journal article" date="2009" name="PLoS Genet.">
        <title>Organised genome dynamics in the Escherichia coli species results in highly diverse adaptive paths.</title>
        <authorList>
            <person name="Touchon M."/>
            <person name="Hoede C."/>
            <person name="Tenaillon O."/>
            <person name="Barbe V."/>
            <person name="Baeriswyl S."/>
            <person name="Bidet P."/>
            <person name="Bingen E."/>
            <person name="Bonacorsi S."/>
            <person name="Bouchier C."/>
            <person name="Bouvet O."/>
            <person name="Calteau A."/>
            <person name="Chiapello H."/>
            <person name="Clermont O."/>
            <person name="Cruveiller S."/>
            <person name="Danchin A."/>
            <person name="Diard M."/>
            <person name="Dossat C."/>
            <person name="Karoui M.E."/>
            <person name="Frapy E."/>
            <person name="Garry L."/>
            <person name="Ghigo J.M."/>
            <person name="Gilles A.M."/>
            <person name="Johnson J."/>
            <person name="Le Bouguenec C."/>
            <person name="Lescat M."/>
            <person name="Mangenot S."/>
            <person name="Martinez-Jehanne V."/>
            <person name="Matic I."/>
            <person name="Nassif X."/>
            <person name="Oztas S."/>
            <person name="Petit M.A."/>
            <person name="Pichon C."/>
            <person name="Rouy Z."/>
            <person name="Ruf C.S."/>
            <person name="Schneider D."/>
            <person name="Tourret J."/>
            <person name="Vacherie B."/>
            <person name="Vallenet D."/>
            <person name="Medigue C."/>
            <person name="Rocha E.P.C."/>
            <person name="Denamur E."/>
        </authorList>
    </citation>
    <scope>NUCLEOTIDE SEQUENCE [LARGE SCALE GENOMIC DNA]</scope>
    <source>
        <strain>ED1a</strain>
    </source>
</reference>